<evidence type="ECO:0000250" key="1"/>
<evidence type="ECO:0000255" key="2"/>
<evidence type="ECO:0000305" key="3"/>
<accession>Q7A3U8</accession>
<organism>
    <name type="scientific">Staphylococcus aureus (strain N315)</name>
    <dbReference type="NCBI Taxonomy" id="158879"/>
    <lineage>
        <taxon>Bacteria</taxon>
        <taxon>Bacillati</taxon>
        <taxon>Bacillota</taxon>
        <taxon>Bacilli</taxon>
        <taxon>Bacillales</taxon>
        <taxon>Staphylococcaceae</taxon>
        <taxon>Staphylococcus</taxon>
    </lineage>
</organism>
<comment type="function">
    <text evidence="1">Probably required for nitrate uptake under anoxic conditions. Also possibly involved in excretion of nitrite produced by the dissimilatory reduction of nitrate (By similarity).</text>
</comment>
<comment type="subcellular location">
    <subcellularLocation>
        <location evidence="3">Cell membrane</location>
        <topology evidence="3">Multi-pass membrane protein</topology>
    </subcellularLocation>
</comment>
<comment type="induction">
    <text evidence="1">Positively regulated by the two-component system NreB/NreC.</text>
</comment>
<comment type="similarity">
    <text evidence="3">Belongs to the major facilitator superfamily. Nitrate/nitrite porter (TC 2.A.1.8) family.</text>
</comment>
<dbReference type="EMBL" id="BA000018">
    <property type="protein sequence ID" value="BAB43478.1"/>
    <property type="molecule type" value="Genomic_DNA"/>
</dbReference>
<dbReference type="PIR" id="E90039">
    <property type="entry name" value="E90039"/>
</dbReference>
<dbReference type="RefSeq" id="WP_000278556.1">
    <property type="nucleotide sequence ID" value="NC_002745.2"/>
</dbReference>
<dbReference type="SMR" id="Q7A3U8"/>
<dbReference type="EnsemblBacteria" id="BAB43478">
    <property type="protein sequence ID" value="BAB43478"/>
    <property type="gene ID" value="BAB43478"/>
</dbReference>
<dbReference type="KEGG" id="sau:SA2176"/>
<dbReference type="HOGENOM" id="CLU_001265_14_0_9"/>
<dbReference type="GO" id="GO:0005886">
    <property type="term" value="C:plasma membrane"/>
    <property type="evidence" value="ECO:0007669"/>
    <property type="project" value="UniProtKB-SubCell"/>
</dbReference>
<dbReference type="GO" id="GO:0015112">
    <property type="term" value="F:nitrate transmembrane transporter activity"/>
    <property type="evidence" value="ECO:0007669"/>
    <property type="project" value="InterPro"/>
</dbReference>
<dbReference type="GO" id="GO:0042128">
    <property type="term" value="P:nitrate assimilation"/>
    <property type="evidence" value="ECO:0007669"/>
    <property type="project" value="UniProtKB-KW"/>
</dbReference>
<dbReference type="CDD" id="cd17341">
    <property type="entry name" value="MFS_NRT2_like"/>
    <property type="match status" value="1"/>
</dbReference>
<dbReference type="Gene3D" id="1.20.1250.20">
    <property type="entry name" value="MFS general substrate transporter like domains"/>
    <property type="match status" value="2"/>
</dbReference>
<dbReference type="InterPro" id="IPR011701">
    <property type="entry name" value="MFS"/>
</dbReference>
<dbReference type="InterPro" id="IPR020846">
    <property type="entry name" value="MFS_dom"/>
</dbReference>
<dbReference type="InterPro" id="IPR036259">
    <property type="entry name" value="MFS_trans_sf"/>
</dbReference>
<dbReference type="InterPro" id="IPR044772">
    <property type="entry name" value="NO3_transporter"/>
</dbReference>
<dbReference type="PANTHER" id="PTHR23515">
    <property type="entry name" value="HIGH-AFFINITY NITRATE TRANSPORTER 2.3"/>
    <property type="match status" value="1"/>
</dbReference>
<dbReference type="Pfam" id="PF07690">
    <property type="entry name" value="MFS_1"/>
    <property type="match status" value="1"/>
</dbReference>
<dbReference type="SUPFAM" id="SSF103473">
    <property type="entry name" value="MFS general substrate transporter"/>
    <property type="match status" value="1"/>
</dbReference>
<dbReference type="PROSITE" id="PS50850">
    <property type="entry name" value="MFS"/>
    <property type="match status" value="1"/>
</dbReference>
<gene>
    <name type="primary">narT</name>
    <name type="synonym">narK</name>
    <name type="ordered locus">SA2176</name>
</gene>
<name>NART_STAAN</name>
<reference key="1">
    <citation type="journal article" date="2001" name="Lancet">
        <title>Whole genome sequencing of meticillin-resistant Staphylococcus aureus.</title>
        <authorList>
            <person name="Kuroda M."/>
            <person name="Ohta T."/>
            <person name="Uchiyama I."/>
            <person name="Baba T."/>
            <person name="Yuzawa H."/>
            <person name="Kobayashi I."/>
            <person name="Cui L."/>
            <person name="Oguchi A."/>
            <person name="Aoki K."/>
            <person name="Nagai Y."/>
            <person name="Lian J.-Q."/>
            <person name="Ito T."/>
            <person name="Kanamori M."/>
            <person name="Matsumaru H."/>
            <person name="Maruyama A."/>
            <person name="Murakami H."/>
            <person name="Hosoyama A."/>
            <person name="Mizutani-Ui Y."/>
            <person name="Takahashi N.K."/>
            <person name="Sawano T."/>
            <person name="Inoue R."/>
            <person name="Kaito C."/>
            <person name="Sekimizu K."/>
            <person name="Hirakawa H."/>
            <person name="Kuhara S."/>
            <person name="Goto S."/>
            <person name="Yabuzaki J."/>
            <person name="Kanehisa M."/>
            <person name="Yamashita A."/>
            <person name="Oshima K."/>
            <person name="Furuya K."/>
            <person name="Yoshino C."/>
            <person name="Shiba T."/>
            <person name="Hattori M."/>
            <person name="Ogasawara N."/>
            <person name="Hayashi H."/>
            <person name="Hiramatsu K."/>
        </authorList>
    </citation>
    <scope>NUCLEOTIDE SEQUENCE [LARGE SCALE GENOMIC DNA]</scope>
    <source>
        <strain>N315</strain>
    </source>
</reference>
<feature type="chain" id="PRO_0000349395" description="Probable nitrate transporter NarT">
    <location>
        <begin position="1"/>
        <end position="389"/>
    </location>
</feature>
<feature type="transmembrane region" description="Helical" evidence="2">
    <location>
        <begin position="14"/>
        <end position="34"/>
    </location>
</feature>
<feature type="transmembrane region" description="Helical" evidence="2">
    <location>
        <begin position="45"/>
        <end position="65"/>
    </location>
</feature>
<feature type="transmembrane region" description="Helical" evidence="2">
    <location>
        <begin position="69"/>
        <end position="89"/>
    </location>
</feature>
<feature type="transmembrane region" description="Helical" evidence="2">
    <location>
        <begin position="97"/>
        <end position="117"/>
    </location>
</feature>
<feature type="transmembrane region" description="Helical" evidence="2">
    <location>
        <begin position="139"/>
        <end position="159"/>
    </location>
</feature>
<feature type="transmembrane region" description="Helical" evidence="2">
    <location>
        <begin position="161"/>
        <end position="181"/>
    </location>
</feature>
<feature type="transmembrane region" description="Helical" evidence="2">
    <location>
        <begin position="211"/>
        <end position="231"/>
    </location>
</feature>
<feature type="transmembrane region" description="Helical" evidence="2">
    <location>
        <begin position="246"/>
        <end position="266"/>
    </location>
</feature>
<feature type="transmembrane region" description="Helical" evidence="2">
    <location>
        <begin position="268"/>
        <end position="288"/>
    </location>
</feature>
<feature type="transmembrane region" description="Helical" evidence="2">
    <location>
        <begin position="294"/>
        <end position="314"/>
    </location>
</feature>
<feature type="transmembrane region" description="Helical" evidence="2">
    <location>
        <begin position="331"/>
        <end position="351"/>
    </location>
</feature>
<feature type="transmembrane region" description="Helical" evidence="2">
    <location>
        <begin position="353"/>
        <end position="373"/>
    </location>
</feature>
<keyword id="KW-1003">Cell membrane</keyword>
<keyword id="KW-0472">Membrane</keyword>
<keyword id="KW-0534">Nitrate assimilation</keyword>
<keyword id="KW-0812">Transmembrane</keyword>
<keyword id="KW-1133">Transmembrane helix</keyword>
<keyword id="KW-0813">Transport</keyword>
<sequence>MYKTKGGFQLTLQTLSLVVGFMAWSIIAPLMPFIKQDVNVTEGQISIILAIPVILGSVLRVPFGYLTNIVGAKWVFFTSFIVLLFPIFFLSQAQTPGMLMASGFFLGVGGAIFSVGVTSVPKYFPKEKVGLANGIYGMGNIGTAVSSFLAPPIAGIIGWQTTVRSYLIIIALFALIMFIFGDTQERKIKVPLMAQMKTLSKNYKLYYLSYWYFITFGAFVAFGIFLPNYLVNHFGIDKVDAGIRSGVFIALATFLRPIGGILGDKFNAVKVLMIDFVIMIIGAVILGISDHIALFTVGCLTISICAGIGNGLIFKLVPSYFSNEAGSANGIVSMMGGLGGFFPPLVITYVANLTGSSHLAFIFLAVFGCIALFTMRHLYQKEYGSLKHS</sequence>
<protein>
    <recommendedName>
        <fullName>Probable nitrate transporter NarT</fullName>
    </recommendedName>
</protein>
<proteinExistence type="inferred from homology"/>